<dbReference type="EC" id="1.18.1.2" evidence="1"/>
<dbReference type="EMBL" id="CP000108">
    <property type="protein sequence ID" value="ABB28207.1"/>
    <property type="molecule type" value="Genomic_DNA"/>
</dbReference>
<dbReference type="SMR" id="Q3AS18"/>
<dbReference type="STRING" id="340177.Cag_0944"/>
<dbReference type="KEGG" id="cch:Cag_0944"/>
<dbReference type="eggNOG" id="COG0492">
    <property type="taxonomic scope" value="Bacteria"/>
</dbReference>
<dbReference type="HOGENOM" id="CLU_031864_5_5_10"/>
<dbReference type="OrthoDB" id="9806179at2"/>
<dbReference type="GO" id="GO:0004324">
    <property type="term" value="F:ferredoxin-NADP+ reductase activity"/>
    <property type="evidence" value="ECO:0007669"/>
    <property type="project" value="UniProtKB-UniRule"/>
</dbReference>
<dbReference type="GO" id="GO:0050660">
    <property type="term" value="F:flavin adenine dinucleotide binding"/>
    <property type="evidence" value="ECO:0007669"/>
    <property type="project" value="UniProtKB-UniRule"/>
</dbReference>
<dbReference type="GO" id="GO:0050661">
    <property type="term" value="F:NADP binding"/>
    <property type="evidence" value="ECO:0007669"/>
    <property type="project" value="UniProtKB-UniRule"/>
</dbReference>
<dbReference type="Gene3D" id="3.50.50.60">
    <property type="entry name" value="FAD/NAD(P)-binding domain"/>
    <property type="match status" value="2"/>
</dbReference>
<dbReference type="HAMAP" id="MF_01685">
    <property type="entry name" value="FENR2"/>
    <property type="match status" value="1"/>
</dbReference>
<dbReference type="InterPro" id="IPR036188">
    <property type="entry name" value="FAD/NAD-bd_sf"/>
</dbReference>
<dbReference type="InterPro" id="IPR023753">
    <property type="entry name" value="FAD/NAD-binding_dom"/>
</dbReference>
<dbReference type="InterPro" id="IPR022890">
    <property type="entry name" value="Fd--NADP_Rdtase_type_2"/>
</dbReference>
<dbReference type="InterPro" id="IPR050097">
    <property type="entry name" value="Ferredoxin-NADP_redctase_2"/>
</dbReference>
<dbReference type="PANTHER" id="PTHR48105">
    <property type="entry name" value="THIOREDOXIN REDUCTASE 1-RELATED-RELATED"/>
    <property type="match status" value="1"/>
</dbReference>
<dbReference type="Pfam" id="PF07992">
    <property type="entry name" value="Pyr_redox_2"/>
    <property type="match status" value="1"/>
</dbReference>
<dbReference type="PRINTS" id="PR00368">
    <property type="entry name" value="FADPNR"/>
</dbReference>
<dbReference type="PRINTS" id="PR00469">
    <property type="entry name" value="PNDRDTASEII"/>
</dbReference>
<dbReference type="SUPFAM" id="SSF51905">
    <property type="entry name" value="FAD/NAD(P)-binding domain"/>
    <property type="match status" value="1"/>
</dbReference>
<name>FENR_CHLCH</name>
<reference key="1">
    <citation type="submission" date="2005-08" db="EMBL/GenBank/DDBJ databases">
        <title>Complete sequence of Chlorobium chlorochromatii CaD3.</title>
        <authorList>
            <consortium name="US DOE Joint Genome Institute"/>
            <person name="Copeland A."/>
            <person name="Lucas S."/>
            <person name="Lapidus A."/>
            <person name="Barry K."/>
            <person name="Detter J.C."/>
            <person name="Glavina T."/>
            <person name="Hammon N."/>
            <person name="Israni S."/>
            <person name="Pitluck S."/>
            <person name="Bryant D."/>
            <person name="Schmutz J."/>
            <person name="Larimer F."/>
            <person name="Land M."/>
            <person name="Kyrpides N."/>
            <person name="Ivanova N."/>
            <person name="Richardson P."/>
        </authorList>
    </citation>
    <scope>NUCLEOTIDE SEQUENCE [LARGE SCALE GENOMIC DNA]</scope>
    <source>
        <strain>CaD3</strain>
    </source>
</reference>
<feature type="chain" id="PRO_0000364817" description="Ferredoxin--NADP reductase">
    <location>
        <begin position="1"/>
        <end position="353"/>
    </location>
</feature>
<feature type="binding site" evidence="1">
    <location>
        <position position="25"/>
    </location>
    <ligand>
        <name>FAD</name>
        <dbReference type="ChEBI" id="CHEBI:57692"/>
    </ligand>
</feature>
<feature type="binding site" evidence="1">
    <location>
        <position position="44"/>
    </location>
    <ligand>
        <name>FAD</name>
        <dbReference type="ChEBI" id="CHEBI:57692"/>
    </ligand>
</feature>
<feature type="binding site" evidence="1">
    <location>
        <position position="52"/>
    </location>
    <ligand>
        <name>FAD</name>
        <dbReference type="ChEBI" id="CHEBI:57692"/>
    </ligand>
</feature>
<feature type="binding site" evidence="1">
    <location>
        <position position="57"/>
    </location>
    <ligand>
        <name>FAD</name>
        <dbReference type="ChEBI" id="CHEBI:57692"/>
    </ligand>
</feature>
<feature type="binding site" evidence="1">
    <location>
        <position position="97"/>
    </location>
    <ligand>
        <name>FAD</name>
        <dbReference type="ChEBI" id="CHEBI:57692"/>
    </ligand>
</feature>
<feature type="binding site" evidence="1">
    <location>
        <position position="132"/>
    </location>
    <ligand>
        <name>FAD</name>
        <dbReference type="ChEBI" id="CHEBI:57692"/>
    </ligand>
</feature>
<feature type="binding site" evidence="1">
    <location>
        <position position="298"/>
    </location>
    <ligand>
        <name>FAD</name>
        <dbReference type="ChEBI" id="CHEBI:57692"/>
    </ligand>
</feature>
<feature type="binding site" evidence="1">
    <location>
        <position position="339"/>
    </location>
    <ligand>
        <name>FAD</name>
        <dbReference type="ChEBI" id="CHEBI:57692"/>
    </ligand>
</feature>
<keyword id="KW-0274">FAD</keyword>
<keyword id="KW-0285">Flavoprotein</keyword>
<keyword id="KW-0521">NADP</keyword>
<keyword id="KW-0560">Oxidoreductase</keyword>
<proteinExistence type="inferred from homology"/>
<evidence type="ECO:0000255" key="1">
    <source>
        <dbReference type="HAMAP-Rule" id="MF_01685"/>
    </source>
</evidence>
<gene>
    <name type="ordered locus">Cag_0944</name>
</gene>
<comment type="catalytic activity">
    <reaction evidence="1">
        <text>2 reduced [2Fe-2S]-[ferredoxin] + NADP(+) + H(+) = 2 oxidized [2Fe-2S]-[ferredoxin] + NADPH</text>
        <dbReference type="Rhea" id="RHEA:20125"/>
        <dbReference type="Rhea" id="RHEA-COMP:10000"/>
        <dbReference type="Rhea" id="RHEA-COMP:10001"/>
        <dbReference type="ChEBI" id="CHEBI:15378"/>
        <dbReference type="ChEBI" id="CHEBI:33737"/>
        <dbReference type="ChEBI" id="CHEBI:33738"/>
        <dbReference type="ChEBI" id="CHEBI:57783"/>
        <dbReference type="ChEBI" id="CHEBI:58349"/>
        <dbReference type="EC" id="1.18.1.2"/>
    </reaction>
</comment>
<comment type="cofactor">
    <cofactor evidence="1">
        <name>FAD</name>
        <dbReference type="ChEBI" id="CHEBI:57692"/>
    </cofactor>
    <text evidence="1">Binds 1 FAD per subunit.</text>
</comment>
<comment type="subunit">
    <text evidence="1">Homodimer.</text>
</comment>
<comment type="similarity">
    <text evidence="1">Belongs to the ferredoxin--NADP reductase type 2 family.</text>
</comment>
<organism>
    <name type="scientific">Chlorobium chlorochromatii (strain CaD3)</name>
    <dbReference type="NCBI Taxonomy" id="340177"/>
    <lineage>
        <taxon>Bacteria</taxon>
        <taxon>Pseudomonadati</taxon>
        <taxon>Chlorobiota</taxon>
        <taxon>Chlorobiia</taxon>
        <taxon>Chlorobiales</taxon>
        <taxon>Chlorobiaceae</taxon>
        <taxon>Chlorobium/Pelodictyon group</taxon>
        <taxon>Chlorobium</taxon>
    </lineage>
</organism>
<accession>Q3AS18</accession>
<protein>
    <recommendedName>
        <fullName evidence="1">Ferredoxin--NADP reductase</fullName>
        <shortName evidence="1">FNR</shortName>
        <shortName evidence="1">Fd-NADP(+) reductase</shortName>
        <ecNumber evidence="1">1.18.1.2</ecNumber>
    </recommendedName>
</protein>
<sequence length="353" mass="38639">MTLNHFYCSIEEEIRDLTIIGGGPTGIFAAFQCGMNNISCRIIESMPQLGGQLAALYPEKHIYDVAGFPEVPAAGLVDTLWKQAERHHPEIILNETVMRYHKRDNGMFEVSVSSGHTYVSRAVLIAAGLGAFTPRKLPQLENIEALEGKSIFYAVKNVADFTGKHVVIVGGGDSALDWSVGLLKSAASVTLVHRMHEFQGHGKTAHEVMEARDAGRLNVMLDTEVMGIDVENEELKAVHVQSKNGKTRTFPADRLLLLIGFKSNIGPLAEWGLEIVDNALVVDSHMKTSVDGLYAAGDIAYYTGKLKIIQTGLSDATMAVRHSLHYIKPGEKIKHTFSSVKMAKEKKKGMQNG</sequence>